<proteinExistence type="inferred from homology"/>
<dbReference type="EC" id="2.5.1.19" evidence="1"/>
<dbReference type="EMBL" id="AM180355">
    <property type="protein sequence ID" value="CAJ68705.1"/>
    <property type="molecule type" value="Genomic_DNA"/>
</dbReference>
<dbReference type="RefSeq" id="WP_011861345.1">
    <property type="nucleotide sequence ID" value="NZ_JAUPES010000018.1"/>
</dbReference>
<dbReference type="RefSeq" id="YP_001088340.1">
    <property type="nucleotide sequence ID" value="NC_009089.1"/>
</dbReference>
<dbReference type="SMR" id="Q187E3"/>
<dbReference type="STRING" id="272563.CD630_18340"/>
<dbReference type="EnsemblBacteria" id="CAJ68705">
    <property type="protein sequence ID" value="CAJ68705"/>
    <property type="gene ID" value="CD630_18340"/>
</dbReference>
<dbReference type="KEGG" id="cdf:CD630_18340"/>
<dbReference type="KEGG" id="pdc:CDIF630_02036"/>
<dbReference type="PATRIC" id="fig|272563.120.peg.1929"/>
<dbReference type="eggNOG" id="COG0128">
    <property type="taxonomic scope" value="Bacteria"/>
</dbReference>
<dbReference type="OrthoDB" id="9809920at2"/>
<dbReference type="PhylomeDB" id="Q187E3"/>
<dbReference type="BioCyc" id="PDIF272563:G12WB-1979-MONOMER"/>
<dbReference type="UniPathway" id="UPA00053">
    <property type="reaction ID" value="UER00089"/>
</dbReference>
<dbReference type="Proteomes" id="UP000001978">
    <property type="component" value="Chromosome"/>
</dbReference>
<dbReference type="GO" id="GO:0005737">
    <property type="term" value="C:cytoplasm"/>
    <property type="evidence" value="ECO:0007669"/>
    <property type="project" value="UniProtKB-SubCell"/>
</dbReference>
<dbReference type="GO" id="GO:0003866">
    <property type="term" value="F:3-phosphoshikimate 1-carboxyvinyltransferase activity"/>
    <property type="evidence" value="ECO:0007669"/>
    <property type="project" value="UniProtKB-UniRule"/>
</dbReference>
<dbReference type="GO" id="GO:0008652">
    <property type="term" value="P:amino acid biosynthetic process"/>
    <property type="evidence" value="ECO:0007669"/>
    <property type="project" value="UniProtKB-KW"/>
</dbReference>
<dbReference type="GO" id="GO:0009073">
    <property type="term" value="P:aromatic amino acid family biosynthetic process"/>
    <property type="evidence" value="ECO:0007669"/>
    <property type="project" value="UniProtKB-KW"/>
</dbReference>
<dbReference type="GO" id="GO:0009423">
    <property type="term" value="P:chorismate biosynthetic process"/>
    <property type="evidence" value="ECO:0007669"/>
    <property type="project" value="UniProtKB-UniRule"/>
</dbReference>
<dbReference type="CDD" id="cd01556">
    <property type="entry name" value="EPSP_synthase"/>
    <property type="match status" value="1"/>
</dbReference>
<dbReference type="Gene3D" id="3.65.10.10">
    <property type="entry name" value="Enolpyruvate transferase domain"/>
    <property type="match status" value="2"/>
</dbReference>
<dbReference type="HAMAP" id="MF_00210">
    <property type="entry name" value="EPSP_synth"/>
    <property type="match status" value="1"/>
</dbReference>
<dbReference type="InterPro" id="IPR001986">
    <property type="entry name" value="Enolpyruvate_Tfrase_dom"/>
</dbReference>
<dbReference type="InterPro" id="IPR036968">
    <property type="entry name" value="Enolpyruvate_Tfrase_sf"/>
</dbReference>
<dbReference type="InterPro" id="IPR006264">
    <property type="entry name" value="EPSP_synthase"/>
</dbReference>
<dbReference type="InterPro" id="IPR023193">
    <property type="entry name" value="EPSP_synthase_CS"/>
</dbReference>
<dbReference type="InterPro" id="IPR013792">
    <property type="entry name" value="RNA3'P_cycl/enolpyr_Trfase_a/b"/>
</dbReference>
<dbReference type="NCBIfam" id="TIGR01356">
    <property type="entry name" value="aroA"/>
    <property type="match status" value="1"/>
</dbReference>
<dbReference type="PANTHER" id="PTHR21090">
    <property type="entry name" value="AROM/DEHYDROQUINATE SYNTHASE"/>
    <property type="match status" value="1"/>
</dbReference>
<dbReference type="PANTHER" id="PTHR21090:SF5">
    <property type="entry name" value="PENTAFUNCTIONAL AROM POLYPEPTIDE"/>
    <property type="match status" value="1"/>
</dbReference>
<dbReference type="Pfam" id="PF00275">
    <property type="entry name" value="EPSP_synthase"/>
    <property type="match status" value="1"/>
</dbReference>
<dbReference type="PIRSF" id="PIRSF000505">
    <property type="entry name" value="EPSPS"/>
    <property type="match status" value="1"/>
</dbReference>
<dbReference type="SUPFAM" id="SSF55205">
    <property type="entry name" value="EPT/RTPC-like"/>
    <property type="match status" value="1"/>
</dbReference>
<dbReference type="PROSITE" id="PS00885">
    <property type="entry name" value="EPSP_SYNTHASE_2"/>
    <property type="match status" value="1"/>
</dbReference>
<sequence length="437" mass="48581">MGSLKIYPSKLSGDVKIPPSKSMAHRAVICSSLSNGKSRISNIDFSDDIIATIRAMTSLGAIIEKKEDILEISGIFSKEGILNRENQLNQPKLTIDCNESGSTLRFLVPISLAFDGVKRFIGRGNLGKRPLDTYYEIFDRQNIKYSYKENQLDLIISGKLKPDEFRVKGNISSQFITGLLFILPTLESDSKIIITTELESKGYLDLTLSTIKDFGVEIINNNYKEFIIKGNQTYKARDYKVEGDYSQGAFYLSADAIGEDISILDLKEDSLQGDSEVVEILSRMGMEILREGNKIKGITNGLNGTLIDASQCPDIIPVLSVVASLSIGKTTIINAGRLRIKECDRLHAINVELSKLGANIEEKEDSLIIEGVSKLNGGVEVWSHKDHRIAMTLAIASCRCDKPIILKDFECVSKSYPHFFKDFKMLGGRIDEWNMGK</sequence>
<feature type="chain" id="PRO_1000099688" description="3-phosphoshikimate 1-carboxyvinyltransferase">
    <location>
        <begin position="1"/>
        <end position="437"/>
    </location>
</feature>
<feature type="active site" description="Proton acceptor" evidence="1">
    <location>
        <position position="314"/>
    </location>
</feature>
<feature type="binding site" evidence="1">
    <location>
        <position position="21"/>
    </location>
    <ligand>
        <name>3-phosphoshikimate</name>
        <dbReference type="ChEBI" id="CHEBI:145989"/>
    </ligand>
</feature>
<feature type="binding site" evidence="1">
    <location>
        <position position="21"/>
    </location>
    <ligand>
        <name>phosphoenolpyruvate</name>
        <dbReference type="ChEBI" id="CHEBI:58702"/>
    </ligand>
</feature>
<feature type="binding site" evidence="1">
    <location>
        <position position="22"/>
    </location>
    <ligand>
        <name>3-phosphoshikimate</name>
        <dbReference type="ChEBI" id="CHEBI:145989"/>
    </ligand>
</feature>
<feature type="binding site" evidence="1">
    <location>
        <position position="26"/>
    </location>
    <ligand>
        <name>3-phosphoshikimate</name>
        <dbReference type="ChEBI" id="CHEBI:145989"/>
    </ligand>
</feature>
<feature type="binding site" evidence="1">
    <location>
        <position position="101"/>
    </location>
    <ligand>
        <name>phosphoenolpyruvate</name>
        <dbReference type="ChEBI" id="CHEBI:58702"/>
    </ligand>
</feature>
<feature type="binding site" evidence="1">
    <location>
        <position position="129"/>
    </location>
    <ligand>
        <name>phosphoenolpyruvate</name>
        <dbReference type="ChEBI" id="CHEBI:58702"/>
    </ligand>
</feature>
<feature type="binding site" evidence="1">
    <location>
        <position position="172"/>
    </location>
    <ligand>
        <name>3-phosphoshikimate</name>
        <dbReference type="ChEBI" id="CHEBI:145989"/>
    </ligand>
</feature>
<feature type="binding site" evidence="1">
    <location>
        <position position="173"/>
    </location>
    <ligand>
        <name>3-phosphoshikimate</name>
        <dbReference type="ChEBI" id="CHEBI:145989"/>
    </ligand>
</feature>
<feature type="binding site" evidence="1">
    <location>
        <position position="174"/>
    </location>
    <ligand>
        <name>3-phosphoshikimate</name>
        <dbReference type="ChEBI" id="CHEBI:145989"/>
    </ligand>
</feature>
<feature type="binding site" evidence="1">
    <location>
        <position position="174"/>
    </location>
    <ligand>
        <name>phosphoenolpyruvate</name>
        <dbReference type="ChEBI" id="CHEBI:58702"/>
    </ligand>
</feature>
<feature type="binding site" evidence="1">
    <location>
        <position position="200"/>
    </location>
    <ligand>
        <name>3-phosphoshikimate</name>
        <dbReference type="ChEBI" id="CHEBI:145989"/>
    </ligand>
</feature>
<feature type="binding site" evidence="1">
    <location>
        <position position="314"/>
    </location>
    <ligand>
        <name>3-phosphoshikimate</name>
        <dbReference type="ChEBI" id="CHEBI:145989"/>
    </ligand>
</feature>
<feature type="binding site" evidence="1">
    <location>
        <position position="341"/>
    </location>
    <ligand>
        <name>3-phosphoshikimate</name>
        <dbReference type="ChEBI" id="CHEBI:145989"/>
    </ligand>
</feature>
<feature type="binding site" evidence="1">
    <location>
        <position position="345"/>
    </location>
    <ligand>
        <name>phosphoenolpyruvate</name>
        <dbReference type="ChEBI" id="CHEBI:58702"/>
    </ligand>
</feature>
<feature type="binding site" evidence="1">
    <location>
        <position position="388"/>
    </location>
    <ligand>
        <name>phosphoenolpyruvate</name>
        <dbReference type="ChEBI" id="CHEBI:58702"/>
    </ligand>
</feature>
<feature type="binding site" evidence="1">
    <location>
        <position position="414"/>
    </location>
    <ligand>
        <name>phosphoenolpyruvate</name>
        <dbReference type="ChEBI" id="CHEBI:58702"/>
    </ligand>
</feature>
<protein>
    <recommendedName>
        <fullName evidence="1">3-phosphoshikimate 1-carboxyvinyltransferase</fullName>
        <ecNumber evidence="1">2.5.1.19</ecNumber>
    </recommendedName>
    <alternativeName>
        <fullName evidence="1">5-enolpyruvylshikimate-3-phosphate synthase</fullName>
        <shortName evidence="1">EPSP synthase</shortName>
        <shortName evidence="1">EPSPS</shortName>
    </alternativeName>
</protein>
<keyword id="KW-0028">Amino-acid biosynthesis</keyword>
<keyword id="KW-0057">Aromatic amino acid biosynthesis</keyword>
<keyword id="KW-0963">Cytoplasm</keyword>
<keyword id="KW-1185">Reference proteome</keyword>
<keyword id="KW-0808">Transferase</keyword>
<reference key="1">
    <citation type="journal article" date="2006" name="Nat. Genet.">
        <title>The multidrug-resistant human pathogen Clostridium difficile has a highly mobile, mosaic genome.</title>
        <authorList>
            <person name="Sebaihia M."/>
            <person name="Wren B.W."/>
            <person name="Mullany P."/>
            <person name="Fairweather N.F."/>
            <person name="Minton N."/>
            <person name="Stabler R."/>
            <person name="Thomson N.R."/>
            <person name="Roberts A.P."/>
            <person name="Cerdeno-Tarraga A.M."/>
            <person name="Wang H."/>
            <person name="Holden M.T.G."/>
            <person name="Wright A."/>
            <person name="Churcher C."/>
            <person name="Quail M.A."/>
            <person name="Baker S."/>
            <person name="Bason N."/>
            <person name="Brooks K."/>
            <person name="Chillingworth T."/>
            <person name="Cronin A."/>
            <person name="Davis P."/>
            <person name="Dowd L."/>
            <person name="Fraser A."/>
            <person name="Feltwell T."/>
            <person name="Hance Z."/>
            <person name="Holroyd S."/>
            <person name="Jagels K."/>
            <person name="Moule S."/>
            <person name="Mungall K."/>
            <person name="Price C."/>
            <person name="Rabbinowitsch E."/>
            <person name="Sharp S."/>
            <person name="Simmonds M."/>
            <person name="Stevens K."/>
            <person name="Unwin L."/>
            <person name="Whithead S."/>
            <person name="Dupuy B."/>
            <person name="Dougan G."/>
            <person name="Barrell B."/>
            <person name="Parkhill J."/>
        </authorList>
    </citation>
    <scope>NUCLEOTIDE SEQUENCE [LARGE SCALE GENOMIC DNA]</scope>
    <source>
        <strain>630</strain>
    </source>
</reference>
<evidence type="ECO:0000255" key="1">
    <source>
        <dbReference type="HAMAP-Rule" id="MF_00210"/>
    </source>
</evidence>
<organism>
    <name type="scientific">Clostridioides difficile (strain 630)</name>
    <name type="common">Peptoclostridium difficile</name>
    <dbReference type="NCBI Taxonomy" id="272563"/>
    <lineage>
        <taxon>Bacteria</taxon>
        <taxon>Bacillati</taxon>
        <taxon>Bacillota</taxon>
        <taxon>Clostridia</taxon>
        <taxon>Peptostreptococcales</taxon>
        <taxon>Peptostreptococcaceae</taxon>
        <taxon>Clostridioides</taxon>
    </lineage>
</organism>
<accession>Q187E3</accession>
<gene>
    <name evidence="1" type="primary">aroA</name>
    <name type="ordered locus">CD630_18340</name>
</gene>
<name>AROA_CLOD6</name>
<comment type="function">
    <text evidence="1">Catalyzes the transfer of the enolpyruvyl moiety of phosphoenolpyruvate (PEP) to the 5-hydroxyl of shikimate-3-phosphate (S3P) to produce enolpyruvyl shikimate-3-phosphate and inorganic phosphate.</text>
</comment>
<comment type="catalytic activity">
    <reaction evidence="1">
        <text>3-phosphoshikimate + phosphoenolpyruvate = 5-O-(1-carboxyvinyl)-3-phosphoshikimate + phosphate</text>
        <dbReference type="Rhea" id="RHEA:21256"/>
        <dbReference type="ChEBI" id="CHEBI:43474"/>
        <dbReference type="ChEBI" id="CHEBI:57701"/>
        <dbReference type="ChEBI" id="CHEBI:58702"/>
        <dbReference type="ChEBI" id="CHEBI:145989"/>
        <dbReference type="EC" id="2.5.1.19"/>
    </reaction>
    <physiologicalReaction direction="left-to-right" evidence="1">
        <dbReference type="Rhea" id="RHEA:21257"/>
    </physiologicalReaction>
</comment>
<comment type="pathway">
    <text evidence="1">Metabolic intermediate biosynthesis; chorismate biosynthesis; chorismate from D-erythrose 4-phosphate and phosphoenolpyruvate: step 6/7.</text>
</comment>
<comment type="subunit">
    <text evidence="1">Monomer.</text>
</comment>
<comment type="subcellular location">
    <subcellularLocation>
        <location evidence="1">Cytoplasm</location>
    </subcellularLocation>
</comment>
<comment type="similarity">
    <text evidence="1">Belongs to the EPSP synthase family.</text>
</comment>